<dbReference type="EC" id="2.1.1.33" evidence="2"/>
<dbReference type="EMBL" id="CP000384">
    <property type="protein sequence ID" value="ABG06294.1"/>
    <property type="molecule type" value="Genomic_DNA"/>
</dbReference>
<dbReference type="SMR" id="Q1BFP0"/>
<dbReference type="KEGG" id="mmc:Mmcs_0173"/>
<dbReference type="HOGENOM" id="CLU_050910_0_2_11"/>
<dbReference type="BioCyc" id="MSP164756:G1G6O-180-MONOMER"/>
<dbReference type="UniPathway" id="UPA00989"/>
<dbReference type="GO" id="GO:0043527">
    <property type="term" value="C:tRNA methyltransferase complex"/>
    <property type="evidence" value="ECO:0007669"/>
    <property type="project" value="TreeGrafter"/>
</dbReference>
<dbReference type="GO" id="GO:0008176">
    <property type="term" value="F:tRNA (guanine(46)-N7)-methyltransferase activity"/>
    <property type="evidence" value="ECO:0007669"/>
    <property type="project" value="UniProtKB-UniRule"/>
</dbReference>
<dbReference type="CDD" id="cd02440">
    <property type="entry name" value="AdoMet_MTases"/>
    <property type="match status" value="1"/>
</dbReference>
<dbReference type="Gene3D" id="3.40.50.150">
    <property type="entry name" value="Vaccinia Virus protein VP39"/>
    <property type="match status" value="1"/>
</dbReference>
<dbReference type="HAMAP" id="MF_01057">
    <property type="entry name" value="tRNA_methyltr_TrmB"/>
    <property type="match status" value="1"/>
</dbReference>
<dbReference type="InterPro" id="IPR029063">
    <property type="entry name" value="SAM-dependent_MTases_sf"/>
</dbReference>
<dbReference type="InterPro" id="IPR003358">
    <property type="entry name" value="tRNA_(Gua-N-7)_MeTrfase_Trmb"/>
</dbReference>
<dbReference type="InterPro" id="IPR055361">
    <property type="entry name" value="tRNA_methyltr_TrmB_bact"/>
</dbReference>
<dbReference type="NCBIfam" id="TIGR00091">
    <property type="entry name" value="tRNA (guanosine(46)-N7)-methyltransferase TrmB"/>
    <property type="match status" value="1"/>
</dbReference>
<dbReference type="PANTHER" id="PTHR23417">
    <property type="entry name" value="3-DEOXY-D-MANNO-OCTULOSONIC-ACID TRANSFERASE/TRNA GUANINE-N 7 - -METHYLTRANSFERASE"/>
    <property type="match status" value="1"/>
</dbReference>
<dbReference type="PANTHER" id="PTHR23417:SF14">
    <property type="entry name" value="PENTACOTRIPEPTIDE-REPEAT REGION OF PRORP DOMAIN-CONTAINING PROTEIN"/>
    <property type="match status" value="1"/>
</dbReference>
<dbReference type="Pfam" id="PF02390">
    <property type="entry name" value="Methyltransf_4"/>
    <property type="match status" value="1"/>
</dbReference>
<dbReference type="SUPFAM" id="SSF53335">
    <property type="entry name" value="S-adenosyl-L-methionine-dependent methyltransferases"/>
    <property type="match status" value="1"/>
</dbReference>
<dbReference type="PROSITE" id="PS51625">
    <property type="entry name" value="SAM_MT_TRMB"/>
    <property type="match status" value="1"/>
</dbReference>
<evidence type="ECO:0000250" key="1"/>
<evidence type="ECO:0000255" key="2">
    <source>
        <dbReference type="HAMAP-Rule" id="MF_01057"/>
    </source>
</evidence>
<evidence type="ECO:0000256" key="3">
    <source>
        <dbReference type="SAM" id="MobiDB-lite"/>
    </source>
</evidence>
<sequence>MRHHGRMHARESDVAGGPARDSAGGPARDSAGGPARDSAGDDSPSAHRHRRVTSFRSRRSALSGGQQDTWERLWPELGTEARDDDGRPAALIDTAAWFGRTAPLVLEIGSGTGTSTLAMAQDEPDIDVIAVEVYRRGLAQLLTGIDRAGVRNIRMIRGDGVDVLEYMVASGSLTGVRVFFPDPWPKARHHKRRLLQPSTVALIADRLRPGGILHAATDHAGYAEQIAAVGDAEPLLRRVDLTDDLPISVRRPVTKYERKALAGPDVAELLWEKVP</sequence>
<gene>
    <name evidence="2" type="primary">trmB</name>
    <name type="ordered locus">Mmcs_0173</name>
</gene>
<comment type="function">
    <text evidence="2">Catalyzes the formation of N(7)-methylguanine at position 46 (m7G46) in tRNA.</text>
</comment>
<comment type="catalytic activity">
    <reaction evidence="2">
        <text>guanosine(46) in tRNA + S-adenosyl-L-methionine = N(7)-methylguanosine(46) in tRNA + S-adenosyl-L-homocysteine</text>
        <dbReference type="Rhea" id="RHEA:42708"/>
        <dbReference type="Rhea" id="RHEA-COMP:10188"/>
        <dbReference type="Rhea" id="RHEA-COMP:10189"/>
        <dbReference type="ChEBI" id="CHEBI:57856"/>
        <dbReference type="ChEBI" id="CHEBI:59789"/>
        <dbReference type="ChEBI" id="CHEBI:74269"/>
        <dbReference type="ChEBI" id="CHEBI:74480"/>
        <dbReference type="EC" id="2.1.1.33"/>
    </reaction>
</comment>
<comment type="pathway">
    <text evidence="2">tRNA modification; N(7)-methylguanine-tRNA biosynthesis.</text>
</comment>
<comment type="similarity">
    <text evidence="2">Belongs to the class I-like SAM-binding methyltransferase superfamily. TrmB family.</text>
</comment>
<keyword id="KW-0489">Methyltransferase</keyword>
<keyword id="KW-0949">S-adenosyl-L-methionine</keyword>
<keyword id="KW-0808">Transferase</keyword>
<keyword id="KW-0819">tRNA processing</keyword>
<reference key="1">
    <citation type="submission" date="2006-06" db="EMBL/GenBank/DDBJ databases">
        <title>Complete sequence of chromosome of Mycobacterium sp. MCS.</title>
        <authorList>
            <consortium name="US DOE Joint Genome Institute"/>
            <person name="Copeland A."/>
            <person name="Lucas S."/>
            <person name="Lapidus A."/>
            <person name="Barry K."/>
            <person name="Detter J.C."/>
            <person name="Glavina del Rio T."/>
            <person name="Hammon N."/>
            <person name="Israni S."/>
            <person name="Dalin E."/>
            <person name="Tice H."/>
            <person name="Pitluck S."/>
            <person name="Martinez M."/>
            <person name="Schmutz J."/>
            <person name="Larimer F."/>
            <person name="Land M."/>
            <person name="Hauser L."/>
            <person name="Kyrpides N."/>
            <person name="Kim E."/>
            <person name="Miller C.D."/>
            <person name="Hughes J.E."/>
            <person name="Anderson A.J."/>
            <person name="Sims R.C."/>
            <person name="Richardson P."/>
        </authorList>
    </citation>
    <scope>NUCLEOTIDE SEQUENCE [LARGE SCALE GENOMIC DNA]</scope>
    <source>
        <strain>MCS</strain>
    </source>
</reference>
<name>TRMB_MYCSS</name>
<organism>
    <name type="scientific">Mycobacterium sp. (strain MCS)</name>
    <dbReference type="NCBI Taxonomy" id="164756"/>
    <lineage>
        <taxon>Bacteria</taxon>
        <taxon>Bacillati</taxon>
        <taxon>Actinomycetota</taxon>
        <taxon>Actinomycetes</taxon>
        <taxon>Mycobacteriales</taxon>
        <taxon>Mycobacteriaceae</taxon>
        <taxon>Mycobacterium</taxon>
    </lineage>
</organism>
<accession>Q1BFP0</accession>
<proteinExistence type="inferred from homology"/>
<feature type="chain" id="PRO_0000288183" description="tRNA (guanine-N(7)-)-methyltransferase">
    <location>
        <begin position="1"/>
        <end position="275"/>
    </location>
</feature>
<feature type="region of interest" description="Disordered" evidence="3">
    <location>
        <begin position="1"/>
        <end position="73"/>
    </location>
</feature>
<feature type="compositionally biased region" description="Basic residues" evidence="3">
    <location>
        <begin position="46"/>
        <end position="59"/>
    </location>
</feature>
<feature type="active site" evidence="1">
    <location>
        <position position="182"/>
    </location>
</feature>
<feature type="binding site" evidence="2">
    <location>
        <position position="107"/>
    </location>
    <ligand>
        <name>S-adenosyl-L-methionine</name>
        <dbReference type="ChEBI" id="CHEBI:59789"/>
    </ligand>
</feature>
<feature type="binding site" evidence="2">
    <location>
        <position position="132"/>
    </location>
    <ligand>
        <name>S-adenosyl-L-methionine</name>
        <dbReference type="ChEBI" id="CHEBI:59789"/>
    </ligand>
</feature>
<feature type="binding site" evidence="2">
    <location>
        <position position="159"/>
    </location>
    <ligand>
        <name>S-adenosyl-L-methionine</name>
        <dbReference type="ChEBI" id="CHEBI:59789"/>
    </ligand>
</feature>
<feature type="binding site" evidence="2">
    <location>
        <position position="182"/>
    </location>
    <ligand>
        <name>S-adenosyl-L-methionine</name>
        <dbReference type="ChEBI" id="CHEBI:59789"/>
    </ligand>
</feature>
<feature type="binding site" evidence="2">
    <location>
        <position position="186"/>
    </location>
    <ligand>
        <name>substrate</name>
    </ligand>
</feature>
<feature type="binding site" evidence="2">
    <location>
        <position position="218"/>
    </location>
    <ligand>
        <name>substrate</name>
    </ligand>
</feature>
<feature type="binding site" evidence="2">
    <location>
        <begin position="254"/>
        <end position="257"/>
    </location>
    <ligand>
        <name>substrate</name>
    </ligand>
</feature>
<protein>
    <recommendedName>
        <fullName evidence="2">tRNA (guanine-N(7)-)-methyltransferase</fullName>
        <ecNumber evidence="2">2.1.1.33</ecNumber>
    </recommendedName>
    <alternativeName>
        <fullName evidence="2">tRNA (guanine(46)-N(7))-methyltransferase</fullName>
    </alternativeName>
    <alternativeName>
        <fullName evidence="2">tRNA(m7G46)-methyltransferase</fullName>
    </alternativeName>
</protein>